<accession>B2VD72</accession>
<organism>
    <name type="scientific">Erwinia tasmaniensis (strain DSM 17950 / CFBP 7177 / CIP 109463 / NCPPB 4357 / Et1/99)</name>
    <dbReference type="NCBI Taxonomy" id="465817"/>
    <lineage>
        <taxon>Bacteria</taxon>
        <taxon>Pseudomonadati</taxon>
        <taxon>Pseudomonadota</taxon>
        <taxon>Gammaproteobacteria</taxon>
        <taxon>Enterobacterales</taxon>
        <taxon>Erwiniaceae</taxon>
        <taxon>Erwinia</taxon>
    </lineage>
</organism>
<gene>
    <name evidence="1" type="primary">secM</name>
    <name type="ordered locus">ETA_07630</name>
</gene>
<reference key="1">
    <citation type="journal article" date="2008" name="Environ. Microbiol.">
        <title>The genome of Erwinia tasmaniensis strain Et1/99, a non-pathogenic bacterium in the genus Erwinia.</title>
        <authorList>
            <person name="Kube M."/>
            <person name="Migdoll A.M."/>
            <person name="Mueller I."/>
            <person name="Kuhl H."/>
            <person name="Beck A."/>
            <person name="Reinhardt R."/>
            <person name="Geider K."/>
        </authorList>
    </citation>
    <scope>NUCLEOTIDE SEQUENCE [LARGE SCALE GENOMIC DNA]</scope>
    <source>
        <strain>DSM 17950 / CFBP 7177 / CIP 109463 / NCPPB 4357 / Et1/99</strain>
    </source>
</reference>
<evidence type="ECO:0000255" key="1">
    <source>
        <dbReference type="HAMAP-Rule" id="MF_01332"/>
    </source>
</evidence>
<proteinExistence type="inferred from homology"/>
<dbReference type="EMBL" id="CU468135">
    <property type="protein sequence ID" value="CAO95809.1"/>
    <property type="molecule type" value="Genomic_DNA"/>
</dbReference>
<dbReference type="RefSeq" id="WP_012440511.1">
    <property type="nucleotide sequence ID" value="NC_010694.1"/>
</dbReference>
<dbReference type="STRING" id="465817.ETA_07630"/>
<dbReference type="KEGG" id="eta:ETA_07630"/>
<dbReference type="eggNOG" id="ENOG5031JGK">
    <property type="taxonomic scope" value="Bacteria"/>
</dbReference>
<dbReference type="HOGENOM" id="CLU_108853_0_0_6"/>
<dbReference type="OrthoDB" id="6495450at2"/>
<dbReference type="Proteomes" id="UP000001726">
    <property type="component" value="Chromosome"/>
</dbReference>
<dbReference type="GO" id="GO:0005829">
    <property type="term" value="C:cytosol"/>
    <property type="evidence" value="ECO:0007669"/>
    <property type="project" value="UniProtKB-SubCell"/>
</dbReference>
<dbReference type="GO" id="GO:0042597">
    <property type="term" value="C:periplasmic space"/>
    <property type="evidence" value="ECO:0007669"/>
    <property type="project" value="UniProtKB-SubCell"/>
</dbReference>
<dbReference type="GO" id="GO:0045182">
    <property type="term" value="F:translation regulator activity"/>
    <property type="evidence" value="ECO:0007669"/>
    <property type="project" value="InterPro"/>
</dbReference>
<dbReference type="HAMAP" id="MF_01332">
    <property type="entry name" value="SecM"/>
    <property type="match status" value="1"/>
</dbReference>
<dbReference type="InterPro" id="IPR009502">
    <property type="entry name" value="SecM"/>
</dbReference>
<dbReference type="NCBIfam" id="NF002799">
    <property type="entry name" value="PRK02943.1-1"/>
    <property type="match status" value="1"/>
</dbReference>
<dbReference type="Pfam" id="PF06558">
    <property type="entry name" value="SecM"/>
    <property type="match status" value="1"/>
</dbReference>
<dbReference type="PIRSF" id="PIRSF004572">
    <property type="entry name" value="SecM"/>
    <property type="match status" value="1"/>
</dbReference>
<name>SECM_ERWT9</name>
<feature type="signal peptide" evidence="1">
    <location>
        <begin position="1"/>
        <end position="36"/>
    </location>
</feature>
<feature type="chain" id="PRO_1000166098" description="Secretion monitor">
    <location>
        <begin position="37"/>
        <end position="167"/>
    </location>
</feature>
<protein>
    <recommendedName>
        <fullName evidence="1">Secretion monitor</fullName>
    </recommendedName>
</protein>
<keyword id="KW-0963">Cytoplasm</keyword>
<keyword id="KW-0574">Periplasm</keyword>
<keyword id="KW-1185">Reference proteome</keyword>
<keyword id="KW-0732">Signal</keyword>
<comment type="function">
    <text evidence="1">Regulates secA expression by translational coupling of the secM secA operon. Translational pausing at a specific Pro residue 5 residues before the end of the protein may allow disruption of a mRNA repressor helix that normally suppresses secA translation initiation.</text>
</comment>
<comment type="subcellular location">
    <subcellularLocation>
        <location evidence="1">Cytoplasm</location>
        <location evidence="1">Cytosol</location>
    </subcellularLocation>
    <subcellularLocation>
        <location evidence="1">Periplasm</location>
    </subcellularLocation>
    <text evidence="1">The active form is cytosolic, while the periplasmic form is rapidly degraded, mainly by the tail-specific protease.</text>
</comment>
<comment type="similarity">
    <text evidence="1">Belongs to the SecM family.</text>
</comment>
<sequence length="167" mass="18483">MIGILNRWRQFGRRYFWPHLLLGMVAASFGLPQASAHDGTTLAETSARSLNIGSATRIDRLVMLQESARRSSFSVDYWHQHAIRTVIRHLSFSLTPSVSTVAATVPLEAHKLALLDTLNALLTHEARPPVIIRHTTQRQVSSSPRHHIGLWLAQVCGIRAGPPSALS</sequence>